<reference key="1">
    <citation type="journal article" date="2004" name="Science">
        <title>The Ashbya gossypii genome as a tool for mapping the ancient Saccharomyces cerevisiae genome.</title>
        <authorList>
            <person name="Dietrich F.S."/>
            <person name="Voegeli S."/>
            <person name="Brachat S."/>
            <person name="Lerch A."/>
            <person name="Gates K."/>
            <person name="Steiner S."/>
            <person name="Mohr C."/>
            <person name="Poehlmann R."/>
            <person name="Luedi P."/>
            <person name="Choi S."/>
            <person name="Wing R.A."/>
            <person name="Flavier A."/>
            <person name="Gaffney T.D."/>
            <person name="Philippsen P."/>
        </authorList>
    </citation>
    <scope>NUCLEOTIDE SEQUENCE [LARGE SCALE GENOMIC DNA]</scope>
    <source>
        <strain>ATCC 10895 / CBS 109.51 / FGSC 9923 / NRRL Y-1056</strain>
    </source>
</reference>
<reference key="2">
    <citation type="journal article" date="2013" name="G3 (Bethesda)">
        <title>Genomes of Ashbya fungi isolated from insects reveal four mating-type loci, numerous translocations, lack of transposons, and distinct gene duplications.</title>
        <authorList>
            <person name="Dietrich F.S."/>
            <person name="Voegeli S."/>
            <person name="Kuo S."/>
            <person name="Philippsen P."/>
        </authorList>
    </citation>
    <scope>GENOME REANNOTATION</scope>
    <source>
        <strain>ATCC 10895 / CBS 109.51 / FGSC 9923 / NRRL Y-1056</strain>
    </source>
</reference>
<keyword id="KW-0143">Chaperone</keyword>
<keyword id="KW-0472">Membrane</keyword>
<keyword id="KW-0496">Mitochondrion</keyword>
<keyword id="KW-0999">Mitochondrion inner membrane</keyword>
<keyword id="KW-0653">Protein transport</keyword>
<keyword id="KW-1185">Reference proteome</keyword>
<keyword id="KW-0811">Translocation</keyword>
<keyword id="KW-0812">Transmembrane</keyword>
<keyword id="KW-1133">Transmembrane helix</keyword>
<keyword id="KW-0813">Transport</keyword>
<proteinExistence type="inferred from homology"/>
<feature type="chain" id="PRO_0000071107" description="Mitochondrial import inner membrane translocase subunit TIM14">
    <location>
        <begin position="1"/>
        <end position="158"/>
    </location>
</feature>
<feature type="topological domain" description="Mitochondrial intermembrane" evidence="2">
    <location>
        <begin position="1"/>
        <end position="55"/>
    </location>
</feature>
<feature type="transmembrane region" description="Helical" evidence="2">
    <location>
        <begin position="56"/>
        <end position="78"/>
    </location>
</feature>
<feature type="topological domain" description="Mitochondrial matrix" evidence="2">
    <location>
        <begin position="79"/>
        <end position="158"/>
    </location>
</feature>
<feature type="domain" description="J" evidence="3">
    <location>
        <begin position="102"/>
        <end position="158"/>
    </location>
</feature>
<organism>
    <name type="scientific">Eremothecium gossypii (strain ATCC 10895 / CBS 109.51 / FGSC 9923 / NRRL Y-1056)</name>
    <name type="common">Yeast</name>
    <name type="synonym">Ashbya gossypii</name>
    <dbReference type="NCBI Taxonomy" id="284811"/>
    <lineage>
        <taxon>Eukaryota</taxon>
        <taxon>Fungi</taxon>
        <taxon>Dikarya</taxon>
        <taxon>Ascomycota</taxon>
        <taxon>Saccharomycotina</taxon>
        <taxon>Saccharomycetes</taxon>
        <taxon>Saccharomycetales</taxon>
        <taxon>Saccharomycetaceae</taxon>
        <taxon>Eremothecium</taxon>
    </lineage>
</organism>
<name>TIM14_EREGS</name>
<sequence length="158" mass="17329">MAPPTIEIPQLPIPGEDNSAHPAQQIRLEQAAVPQQKRGMDLYFDKVVDFVGEHPVVGGIGGFVALYAAAGLWRAVSIRMNGGKEATKFLKGGFDPKMNTKEALAILNLTESTLTKKRVKDVHRKIMLANHPDKGGSPYLATKINEAKDFLEKRGIRK</sequence>
<comment type="function">
    <text evidence="1">Essential component of the PAM complex, a complex required for the translocation of transit peptide-containing proteins from the inner membrane into the mitochondrial matrix in an ATP-dependent manner. In the complex, it is required to stimulate activity of mtHSP70 (SSC1) (By similarity).</text>
</comment>
<comment type="subunit">
    <text evidence="1">Heterodimer with PAM16. Component of the PAM complex, at least composed of mtHsp70, MGE1, TIM44, PAM16, PAM17 and PAM18 (By similarity).</text>
</comment>
<comment type="subcellular location">
    <subcellularLocation>
        <location evidence="1">Mitochondrion inner membrane</location>
        <topology evidence="1">Single-pass membrane protein</topology>
    </subcellularLocation>
</comment>
<comment type="domain">
    <text evidence="1">The J domain is essential for co-chaperone activity and mediates the heterodimerization with the J-like domain of PAM16.</text>
</comment>
<comment type="similarity">
    <text evidence="4">Belongs to the TIM14 family.</text>
</comment>
<gene>
    <name type="primary">PAM18</name>
    <name type="synonym">TIM14</name>
    <name type="ordered locus">ADR345C</name>
</gene>
<evidence type="ECO:0000250" key="1"/>
<evidence type="ECO:0000255" key="2"/>
<evidence type="ECO:0000255" key="3">
    <source>
        <dbReference type="PROSITE-ProRule" id="PRU00286"/>
    </source>
</evidence>
<evidence type="ECO:0000305" key="4"/>
<dbReference type="EMBL" id="AE016817">
    <property type="protein sequence ID" value="AAS52265.1"/>
    <property type="molecule type" value="Genomic_DNA"/>
</dbReference>
<dbReference type="RefSeq" id="NP_984441.1">
    <property type="nucleotide sequence ID" value="NM_209794.1"/>
</dbReference>
<dbReference type="SMR" id="Q759D2"/>
<dbReference type="FunCoup" id="Q759D2">
    <property type="interactions" value="55"/>
</dbReference>
<dbReference type="STRING" id="284811.Q759D2"/>
<dbReference type="EnsemblFungi" id="AAS52265">
    <property type="protein sequence ID" value="AAS52265"/>
    <property type="gene ID" value="AGOS_ADR345C"/>
</dbReference>
<dbReference type="GeneID" id="4620606"/>
<dbReference type="KEGG" id="ago:AGOS_ADR345C"/>
<dbReference type="eggNOG" id="KOG0723">
    <property type="taxonomic scope" value="Eukaryota"/>
</dbReference>
<dbReference type="HOGENOM" id="CLU_017633_13_0_1"/>
<dbReference type="InParanoid" id="Q759D2"/>
<dbReference type="OMA" id="EGSAEWY"/>
<dbReference type="OrthoDB" id="240298at2759"/>
<dbReference type="Proteomes" id="UP000000591">
    <property type="component" value="Chromosome IV"/>
</dbReference>
<dbReference type="GO" id="GO:0001405">
    <property type="term" value="C:PAM complex, Tim23 associated import motor"/>
    <property type="evidence" value="ECO:0000318"/>
    <property type="project" value="GO_Central"/>
</dbReference>
<dbReference type="GO" id="GO:0001671">
    <property type="term" value="F:ATPase activator activity"/>
    <property type="evidence" value="ECO:0000318"/>
    <property type="project" value="GO_Central"/>
</dbReference>
<dbReference type="GO" id="GO:0030150">
    <property type="term" value="P:protein import into mitochondrial matrix"/>
    <property type="evidence" value="ECO:0000318"/>
    <property type="project" value="GO_Central"/>
</dbReference>
<dbReference type="CDD" id="cd06257">
    <property type="entry name" value="DnaJ"/>
    <property type="match status" value="1"/>
</dbReference>
<dbReference type="FunFam" id="1.10.287.110:FF:000001">
    <property type="entry name" value="Import inner membrane translocase subunit tim14"/>
    <property type="match status" value="1"/>
</dbReference>
<dbReference type="Gene3D" id="1.10.287.110">
    <property type="entry name" value="DnaJ domain"/>
    <property type="match status" value="1"/>
</dbReference>
<dbReference type="InterPro" id="IPR001623">
    <property type="entry name" value="DnaJ_domain"/>
</dbReference>
<dbReference type="InterPro" id="IPR036869">
    <property type="entry name" value="J_dom_sf"/>
</dbReference>
<dbReference type="PANTHER" id="PTHR12763">
    <property type="match status" value="1"/>
</dbReference>
<dbReference type="PANTHER" id="PTHR12763:SF28">
    <property type="entry name" value="GEO10507P1-RELATED"/>
    <property type="match status" value="1"/>
</dbReference>
<dbReference type="SMART" id="SM00271">
    <property type="entry name" value="DnaJ"/>
    <property type="match status" value="1"/>
</dbReference>
<dbReference type="SUPFAM" id="SSF46565">
    <property type="entry name" value="Chaperone J-domain"/>
    <property type="match status" value="1"/>
</dbReference>
<dbReference type="PROSITE" id="PS50076">
    <property type="entry name" value="DNAJ_2"/>
    <property type="match status" value="1"/>
</dbReference>
<protein>
    <recommendedName>
        <fullName>Mitochondrial import inner membrane translocase subunit TIM14</fullName>
    </recommendedName>
    <alternativeName>
        <fullName>Presequence translocated-associated motor subunit PAM18</fullName>
    </alternativeName>
</protein>
<accession>Q759D2</accession>